<comment type="subunit">
    <text evidence="1">Part of the 50S ribosomal subunit. Contacts protein L32.</text>
</comment>
<comment type="similarity">
    <text evidence="1">Belongs to the bacterial ribosomal protein bL17 family.</text>
</comment>
<keyword id="KW-0687">Ribonucleoprotein</keyword>
<keyword id="KW-0689">Ribosomal protein</keyword>
<evidence type="ECO:0000255" key="1">
    <source>
        <dbReference type="HAMAP-Rule" id="MF_01368"/>
    </source>
</evidence>
<evidence type="ECO:0000305" key="2"/>
<feature type="chain" id="PRO_0000267915" description="Large ribosomal subunit protein bL17">
    <location>
        <begin position="1"/>
        <end position="128"/>
    </location>
</feature>
<organism>
    <name type="scientific">Pseudomonas fluorescens (strain ATCC BAA-477 / NRRL B-23932 / Pf-5)</name>
    <dbReference type="NCBI Taxonomy" id="220664"/>
    <lineage>
        <taxon>Bacteria</taxon>
        <taxon>Pseudomonadati</taxon>
        <taxon>Pseudomonadota</taxon>
        <taxon>Gammaproteobacteria</taxon>
        <taxon>Pseudomonadales</taxon>
        <taxon>Pseudomonadaceae</taxon>
        <taxon>Pseudomonas</taxon>
    </lineage>
</organism>
<reference key="1">
    <citation type="journal article" date="2005" name="Nat. Biotechnol.">
        <title>Complete genome sequence of the plant commensal Pseudomonas fluorescens Pf-5.</title>
        <authorList>
            <person name="Paulsen I.T."/>
            <person name="Press C.M."/>
            <person name="Ravel J."/>
            <person name="Kobayashi D.Y."/>
            <person name="Myers G.S.A."/>
            <person name="Mavrodi D.V."/>
            <person name="DeBoy R.T."/>
            <person name="Seshadri R."/>
            <person name="Ren Q."/>
            <person name="Madupu R."/>
            <person name="Dodson R.J."/>
            <person name="Durkin A.S."/>
            <person name="Brinkac L.M."/>
            <person name="Daugherty S.C."/>
            <person name="Sullivan S.A."/>
            <person name="Rosovitz M.J."/>
            <person name="Gwinn M.L."/>
            <person name="Zhou L."/>
            <person name="Schneider D.J."/>
            <person name="Cartinhour S.W."/>
            <person name="Nelson W.C."/>
            <person name="Weidman J."/>
            <person name="Watkins K."/>
            <person name="Tran K."/>
            <person name="Khouri H."/>
            <person name="Pierson E.A."/>
            <person name="Pierson L.S. III"/>
            <person name="Thomashow L.S."/>
            <person name="Loper J.E."/>
        </authorList>
    </citation>
    <scope>NUCLEOTIDE SEQUENCE [LARGE SCALE GENOMIC DNA]</scope>
    <source>
        <strain>ATCC BAA-477 / NRRL B-23932 / Pf-5</strain>
    </source>
</reference>
<protein>
    <recommendedName>
        <fullName evidence="1">Large ribosomal subunit protein bL17</fullName>
    </recommendedName>
    <alternativeName>
        <fullName evidence="2">50S ribosomal protein L17</fullName>
    </alternativeName>
</protein>
<accession>Q4K558</accession>
<proteinExistence type="inferred from homology"/>
<sequence length="128" mass="14400">MRHRKSGRHLSRTSSHRKAMFQNMAVSLFEHELIKTTLPKAKELRRVAEPLITLAKTDSLANRRLAFDRTRSKAIVGKLFNDLGKRYATREGGYLRILKCGFRAGDNAPMAYVELVDRAVGGEAVSAE</sequence>
<dbReference type="EMBL" id="CP000076">
    <property type="protein sequence ID" value="AAY94763.1"/>
    <property type="molecule type" value="Genomic_DNA"/>
</dbReference>
<dbReference type="RefSeq" id="WP_007924175.1">
    <property type="nucleotide sequence ID" value="NC_004129.6"/>
</dbReference>
<dbReference type="SMR" id="Q4K558"/>
<dbReference type="STRING" id="220664.PFL_5557"/>
<dbReference type="GeneID" id="93406122"/>
<dbReference type="KEGG" id="pfl:PFL_5557"/>
<dbReference type="eggNOG" id="COG0203">
    <property type="taxonomic scope" value="Bacteria"/>
</dbReference>
<dbReference type="HOGENOM" id="CLU_074407_2_0_6"/>
<dbReference type="Proteomes" id="UP000008540">
    <property type="component" value="Chromosome"/>
</dbReference>
<dbReference type="GO" id="GO:0022625">
    <property type="term" value="C:cytosolic large ribosomal subunit"/>
    <property type="evidence" value="ECO:0007669"/>
    <property type="project" value="TreeGrafter"/>
</dbReference>
<dbReference type="GO" id="GO:0003735">
    <property type="term" value="F:structural constituent of ribosome"/>
    <property type="evidence" value="ECO:0007669"/>
    <property type="project" value="InterPro"/>
</dbReference>
<dbReference type="GO" id="GO:0006412">
    <property type="term" value="P:translation"/>
    <property type="evidence" value="ECO:0007669"/>
    <property type="project" value="UniProtKB-UniRule"/>
</dbReference>
<dbReference type="FunFam" id="3.90.1030.10:FF:000001">
    <property type="entry name" value="50S ribosomal protein L17"/>
    <property type="match status" value="1"/>
</dbReference>
<dbReference type="Gene3D" id="3.90.1030.10">
    <property type="entry name" value="Ribosomal protein L17"/>
    <property type="match status" value="1"/>
</dbReference>
<dbReference type="HAMAP" id="MF_01368">
    <property type="entry name" value="Ribosomal_bL17"/>
    <property type="match status" value="1"/>
</dbReference>
<dbReference type="InterPro" id="IPR000456">
    <property type="entry name" value="Ribosomal_bL17"/>
</dbReference>
<dbReference type="InterPro" id="IPR047859">
    <property type="entry name" value="Ribosomal_bL17_CS"/>
</dbReference>
<dbReference type="InterPro" id="IPR036373">
    <property type="entry name" value="Ribosomal_bL17_sf"/>
</dbReference>
<dbReference type="NCBIfam" id="TIGR00059">
    <property type="entry name" value="L17"/>
    <property type="match status" value="1"/>
</dbReference>
<dbReference type="PANTHER" id="PTHR14413:SF16">
    <property type="entry name" value="LARGE RIBOSOMAL SUBUNIT PROTEIN BL17M"/>
    <property type="match status" value="1"/>
</dbReference>
<dbReference type="PANTHER" id="PTHR14413">
    <property type="entry name" value="RIBOSOMAL PROTEIN L17"/>
    <property type="match status" value="1"/>
</dbReference>
<dbReference type="Pfam" id="PF01196">
    <property type="entry name" value="Ribosomal_L17"/>
    <property type="match status" value="1"/>
</dbReference>
<dbReference type="SUPFAM" id="SSF64263">
    <property type="entry name" value="Prokaryotic ribosomal protein L17"/>
    <property type="match status" value="1"/>
</dbReference>
<dbReference type="PROSITE" id="PS01167">
    <property type="entry name" value="RIBOSOMAL_L17"/>
    <property type="match status" value="1"/>
</dbReference>
<name>RL17_PSEF5</name>
<gene>
    <name evidence="1" type="primary">rplQ</name>
    <name type="ordered locus">PFL_5557</name>
</gene>